<feature type="chain" id="PRO_0000169084" description="Carboxy-S-adenosyl-L-methionine synthase">
    <location>
        <begin position="1"/>
        <end position="241"/>
    </location>
</feature>
<feature type="binding site" evidence="1 3">
    <location>
        <position position="38"/>
    </location>
    <ligand>
        <name>S-adenosyl-L-methionine</name>
        <dbReference type="ChEBI" id="CHEBI:59789"/>
    </ligand>
</feature>
<feature type="binding site" evidence="1 3">
    <location>
        <begin position="63"/>
        <end position="65"/>
    </location>
    <ligand>
        <name>S-adenosyl-L-methionine</name>
        <dbReference type="ChEBI" id="CHEBI:59789"/>
    </ligand>
</feature>
<feature type="binding site" evidence="1 3">
    <location>
        <begin position="88"/>
        <end position="89"/>
    </location>
    <ligand>
        <name>S-adenosyl-L-methionine</name>
        <dbReference type="ChEBI" id="CHEBI:59789"/>
    </ligand>
</feature>
<feature type="binding site" evidence="1 3">
    <location>
        <begin position="116"/>
        <end position="117"/>
    </location>
    <ligand>
        <name>S-adenosyl-L-methionine</name>
        <dbReference type="ChEBI" id="CHEBI:59789"/>
    </ligand>
</feature>
<feature type="binding site" evidence="1 3">
    <location>
        <position position="131"/>
    </location>
    <ligand>
        <name>S-adenosyl-L-methionine</name>
        <dbReference type="ChEBI" id="CHEBI:59789"/>
    </ligand>
</feature>
<feature type="binding site" evidence="1">
    <location>
        <position position="198"/>
    </location>
    <ligand>
        <name>S-adenosyl-L-methionine</name>
        <dbReference type="ChEBI" id="CHEBI:59789"/>
    </ligand>
</feature>
<feature type="helix" evidence="4">
    <location>
        <begin position="21"/>
        <end position="34"/>
    </location>
</feature>
<feature type="helix" evidence="4">
    <location>
        <begin position="38"/>
        <end position="52"/>
    </location>
</feature>
<feature type="strand" evidence="4">
    <location>
        <begin position="58"/>
        <end position="63"/>
    </location>
</feature>
<feature type="helix" evidence="4">
    <location>
        <begin position="68"/>
        <end position="75"/>
    </location>
</feature>
<feature type="strand" evidence="4">
    <location>
        <begin position="83"/>
        <end position="87"/>
    </location>
</feature>
<feature type="helix" evidence="4">
    <location>
        <begin position="91"/>
        <end position="102"/>
    </location>
</feature>
<feature type="strand" evidence="4">
    <location>
        <begin position="110"/>
        <end position="113"/>
    </location>
</feature>
<feature type="turn" evidence="4">
    <location>
        <begin position="117"/>
        <end position="119"/>
    </location>
</feature>
<feature type="strand" evidence="4">
    <location>
        <begin position="124"/>
        <end position="132"/>
    </location>
</feature>
<feature type="helix" evidence="4">
    <location>
        <begin position="134"/>
        <end position="136"/>
    </location>
</feature>
<feature type="helix" evidence="4">
    <location>
        <begin position="139"/>
        <end position="141"/>
    </location>
</feature>
<feature type="helix" evidence="4">
    <location>
        <begin position="142"/>
        <end position="152"/>
    </location>
</feature>
<feature type="strand" evidence="4">
    <location>
        <begin position="153"/>
        <end position="164"/>
    </location>
</feature>
<feature type="helix" evidence="4">
    <location>
        <begin position="170"/>
        <end position="186"/>
    </location>
</feature>
<feature type="helix" evidence="4">
    <location>
        <begin position="189"/>
        <end position="191"/>
    </location>
</feature>
<feature type="helix" evidence="4">
    <location>
        <begin position="195"/>
        <end position="204"/>
    </location>
</feature>
<feature type="helix" evidence="4">
    <location>
        <begin position="210"/>
        <end position="220"/>
    </location>
</feature>
<feature type="strand" evidence="4">
    <location>
        <begin position="223"/>
        <end position="231"/>
    </location>
</feature>
<feature type="strand" evidence="4">
    <location>
        <begin position="234"/>
        <end position="240"/>
    </location>
</feature>
<evidence type="ECO:0000255" key="1">
    <source>
        <dbReference type="HAMAP-Rule" id="MF_01589"/>
    </source>
</evidence>
<evidence type="ECO:0000269" key="2">
    <source>
    </source>
</evidence>
<evidence type="ECO:0000305" key="3">
    <source>
    </source>
</evidence>
<evidence type="ECO:0007829" key="4">
    <source>
        <dbReference type="PDB" id="1IM8"/>
    </source>
</evidence>
<reference key="1">
    <citation type="journal article" date="1995" name="Science">
        <title>Whole-genome random sequencing and assembly of Haemophilus influenzae Rd.</title>
        <authorList>
            <person name="Fleischmann R.D."/>
            <person name="Adams M.D."/>
            <person name="White O."/>
            <person name="Clayton R.A."/>
            <person name="Kirkness E.F."/>
            <person name="Kerlavage A.R."/>
            <person name="Bult C.J."/>
            <person name="Tomb J.-F."/>
            <person name="Dougherty B.A."/>
            <person name="Merrick J.M."/>
            <person name="McKenney K."/>
            <person name="Sutton G.G."/>
            <person name="FitzHugh W."/>
            <person name="Fields C.A."/>
            <person name="Gocayne J.D."/>
            <person name="Scott J.D."/>
            <person name="Shirley R."/>
            <person name="Liu L.-I."/>
            <person name="Glodek A."/>
            <person name="Kelley J.M."/>
            <person name="Weidman J.F."/>
            <person name="Phillips C.A."/>
            <person name="Spriggs T."/>
            <person name="Hedblom E."/>
            <person name="Cotton M.D."/>
            <person name="Utterback T.R."/>
            <person name="Hanna M.C."/>
            <person name="Nguyen D.T."/>
            <person name="Saudek D.M."/>
            <person name="Brandon R.C."/>
            <person name="Fine L.D."/>
            <person name="Fritchman J.L."/>
            <person name="Fuhrmann J.L."/>
            <person name="Geoghagen N.S.M."/>
            <person name="Gnehm C.L."/>
            <person name="McDonald L.A."/>
            <person name="Small K.V."/>
            <person name="Fraser C.M."/>
            <person name="Smith H.O."/>
            <person name="Venter J.C."/>
        </authorList>
    </citation>
    <scope>NUCLEOTIDE SEQUENCE [LARGE SCALE GENOMIC DNA]</scope>
    <source>
        <strain>ATCC 51907 / DSM 11121 / KW20 / Rd</strain>
    </source>
</reference>
<reference key="2">
    <citation type="submission" date="1996-09" db="EMBL/GenBank/DDBJ databases">
        <authorList>
            <person name="White O."/>
            <person name="Clayton R.A."/>
            <person name="Kerlavage A.R."/>
            <person name="Fleischmann R.D."/>
        </authorList>
    </citation>
    <scope>SEQUENCE REVISION</scope>
</reference>
<reference key="3">
    <citation type="journal article" date="2001" name="Proteins">
        <title>Crystal structure of YecO from Haemophilus influenzae (HI0319) reveals a methyltransferase fold and a bound S-adenosylhomocysteine.</title>
        <authorList>
            <person name="Lim K."/>
            <person name="Zhang H."/>
            <person name="Tempczyk A."/>
            <person name="Bonander N."/>
            <person name="Toedt J."/>
            <person name="Howard A."/>
            <person name="Eisenstein E."/>
            <person name="Herzberg O."/>
        </authorList>
    </citation>
    <scope>X-RAY CRYSTALLOGRAPHY (2.2 ANGSTROMS) IN COMPLEX WITH S-ADENOSYL-L-HOMOSELENOCYSTEINE</scope>
    <scope>SUBUNIT</scope>
    <source>
        <strain>ATCC 51907 / DSM 11121 / KW20 / Rd</strain>
    </source>
</reference>
<protein>
    <recommendedName>
        <fullName evidence="1">Carboxy-S-adenosyl-L-methionine synthase</fullName>
        <shortName evidence="1">Cx-SAM synthase</shortName>
        <ecNumber evidence="1">2.1.3.-</ecNumber>
    </recommendedName>
</protein>
<name>CMOA_HAEIN</name>
<sequence length="241" mass="27372">MVKDTLFSTPIAKLGDFIFDENVAEVFPDMIQRSVPGYSNIITAIGMLAERFVTADSNVYDLGCSRGAATLSARRNINQPNVKIIGIDNSQPMVERCRQHIAAYHSEIPVEILCNDIRHVEIKNASMVILNFTLQFLPPEDRIALLTKIYEGLNPNGVLVLSEKFRFEDTKINHLLIDLHHQFKRANGYSELEVSQKRTALENVMRTDSIETHKVRLKNVGFSQVELWFQCFNFGSMIAVK</sequence>
<gene>
    <name evidence="1" type="primary">cmoA</name>
    <name type="ordered locus">HI_0319</name>
</gene>
<accession>P43985</accession>
<accession>P43986</accession>
<organism>
    <name type="scientific">Haemophilus influenzae (strain ATCC 51907 / DSM 11121 / KW20 / Rd)</name>
    <dbReference type="NCBI Taxonomy" id="71421"/>
    <lineage>
        <taxon>Bacteria</taxon>
        <taxon>Pseudomonadati</taxon>
        <taxon>Pseudomonadota</taxon>
        <taxon>Gammaproteobacteria</taxon>
        <taxon>Pasteurellales</taxon>
        <taxon>Pasteurellaceae</taxon>
        <taxon>Haemophilus</taxon>
    </lineage>
</organism>
<proteinExistence type="evidence at protein level"/>
<keyword id="KW-0002">3D-structure</keyword>
<keyword id="KW-1185">Reference proteome</keyword>
<keyword id="KW-0949">S-adenosyl-L-methionine</keyword>
<keyword id="KW-0808">Transferase</keyword>
<dbReference type="EC" id="2.1.3.-" evidence="1"/>
<dbReference type="EMBL" id="L42023">
    <property type="protein sequence ID" value="AAC21983.1"/>
    <property type="molecule type" value="Genomic_DNA"/>
</dbReference>
<dbReference type="PIR" id="C64006">
    <property type="entry name" value="C64006"/>
</dbReference>
<dbReference type="RefSeq" id="NP_438485.1">
    <property type="nucleotide sequence ID" value="NC_000907.1"/>
</dbReference>
<dbReference type="PDB" id="1IM8">
    <property type="method" value="X-ray"/>
    <property type="resolution" value="2.20 A"/>
    <property type="chains" value="A/B=1-241"/>
</dbReference>
<dbReference type="PDBsum" id="1IM8"/>
<dbReference type="SMR" id="P43985"/>
<dbReference type="STRING" id="71421.HI_0319"/>
<dbReference type="DrugBank" id="DB03423">
    <property type="generic name" value="S-Adenosyl-L-Homoselenocysteine"/>
</dbReference>
<dbReference type="EnsemblBacteria" id="AAC21983">
    <property type="protein sequence ID" value="AAC21983"/>
    <property type="gene ID" value="HI_0319"/>
</dbReference>
<dbReference type="KEGG" id="hin:HI_0319"/>
<dbReference type="PATRIC" id="fig|71421.8.peg.337"/>
<dbReference type="eggNOG" id="COG4106">
    <property type="taxonomic scope" value="Bacteria"/>
</dbReference>
<dbReference type="HOGENOM" id="CLU_078475_0_0_6"/>
<dbReference type="OrthoDB" id="9779941at2"/>
<dbReference type="PhylomeDB" id="P43985"/>
<dbReference type="BioCyc" id="HINF71421:G1GJ1-336-MONOMER"/>
<dbReference type="EvolutionaryTrace" id="P43985"/>
<dbReference type="Proteomes" id="UP000000579">
    <property type="component" value="Chromosome"/>
</dbReference>
<dbReference type="GO" id="GO:0016743">
    <property type="term" value="F:carboxyl- or carbamoyltransferase activity"/>
    <property type="evidence" value="ECO:0007669"/>
    <property type="project" value="UniProtKB-UniRule"/>
</dbReference>
<dbReference type="GO" id="GO:1904047">
    <property type="term" value="F:S-adenosyl-L-methionine binding"/>
    <property type="evidence" value="ECO:0007669"/>
    <property type="project" value="UniProtKB-UniRule"/>
</dbReference>
<dbReference type="GO" id="GO:0002098">
    <property type="term" value="P:tRNA wobble uridine modification"/>
    <property type="evidence" value="ECO:0007669"/>
    <property type="project" value="InterPro"/>
</dbReference>
<dbReference type="CDD" id="cd02440">
    <property type="entry name" value="AdoMet_MTases"/>
    <property type="match status" value="1"/>
</dbReference>
<dbReference type="Gene3D" id="3.40.50.150">
    <property type="entry name" value="Vaccinia Virus protein VP39"/>
    <property type="match status" value="1"/>
</dbReference>
<dbReference type="HAMAP" id="MF_01589">
    <property type="entry name" value="Cx_SAM_synthase"/>
    <property type="match status" value="1"/>
</dbReference>
<dbReference type="InterPro" id="IPR005271">
    <property type="entry name" value="CmoA"/>
</dbReference>
<dbReference type="InterPro" id="IPR041698">
    <property type="entry name" value="Methyltransf_25"/>
</dbReference>
<dbReference type="InterPro" id="IPR029063">
    <property type="entry name" value="SAM-dependent_MTases_sf"/>
</dbReference>
<dbReference type="NCBIfam" id="TIGR00740">
    <property type="entry name" value="carboxy-S-adenosyl-L-methionine synthase CmoA"/>
    <property type="match status" value="1"/>
</dbReference>
<dbReference type="NCBIfam" id="NF011995">
    <property type="entry name" value="PRK15451.1"/>
    <property type="match status" value="1"/>
</dbReference>
<dbReference type="PANTHER" id="PTHR43861:SF2">
    <property type="entry name" value="CARBOXY-S-ADENOSYL-L-METHIONINE SYNTHASE"/>
    <property type="match status" value="1"/>
</dbReference>
<dbReference type="PANTHER" id="PTHR43861">
    <property type="entry name" value="TRANS-ACONITATE 2-METHYLTRANSFERASE-RELATED"/>
    <property type="match status" value="1"/>
</dbReference>
<dbReference type="Pfam" id="PF13649">
    <property type="entry name" value="Methyltransf_25"/>
    <property type="match status" value="1"/>
</dbReference>
<dbReference type="PIRSF" id="PIRSF006325">
    <property type="entry name" value="MeTrfase_bac"/>
    <property type="match status" value="1"/>
</dbReference>
<dbReference type="SUPFAM" id="SSF53335">
    <property type="entry name" value="S-adenosyl-L-methionine-dependent methyltransferases"/>
    <property type="match status" value="1"/>
</dbReference>
<comment type="function">
    <text evidence="1">Catalyzes the conversion of S-adenosyl-L-methionine (SAM) to carboxy-S-adenosyl-L-methionine (Cx-SAM).</text>
</comment>
<comment type="catalytic activity">
    <reaction evidence="1">
        <text>prephenate + S-adenosyl-L-methionine = carboxy-S-adenosyl-L-methionine + 3-phenylpyruvate + H2O</text>
        <dbReference type="Rhea" id="RHEA:51692"/>
        <dbReference type="ChEBI" id="CHEBI:15377"/>
        <dbReference type="ChEBI" id="CHEBI:18005"/>
        <dbReference type="ChEBI" id="CHEBI:29934"/>
        <dbReference type="ChEBI" id="CHEBI:59789"/>
        <dbReference type="ChEBI" id="CHEBI:134278"/>
    </reaction>
</comment>
<comment type="subunit">
    <text evidence="1 2">Homodimer.</text>
</comment>
<comment type="similarity">
    <text evidence="1">Belongs to the class I-like SAM-binding methyltransferase superfamily. Cx-SAM synthase family.</text>
</comment>